<keyword id="KW-0025">Alternative splicing</keyword>
<keyword id="KW-1185">Reference proteome</keyword>
<gene>
    <name type="ordered locus">At1g53890</name>
    <name type="ORF">T18A20.12</name>
</gene>
<sequence length="217" mass="24904">MQIYNPISPVKTMVKIYPHLAFPVDMDVVQDKILPYLTTEQERFTIWMKSLVFNSKGCTVFDSKGNLIYRVDNYDSKSWSNEVYFMDLNGKILFTLRQKKLGFFKSWEGYNSTGTRFRLRKIFKILPRESSSSYKVVMGSRIVDGDQQSCYKIVNRGSVFAIKDGSGRLMAEVKNKLSDISGLDLGDDVLTMMVEPQLDHSLIMGIVIAYKLTKCKL</sequence>
<name>LOR3_ARATH</name>
<feature type="chain" id="PRO_0000399235" description="Protein LURP-one-related 3">
    <location>
        <begin position="1"/>
        <end position="217"/>
    </location>
</feature>
<feature type="splice variant" id="VSP_039834" description="In isoform 2." evidence="2">
    <original>EPQLDHSL</original>
    <variation>VILKVSMF</variation>
    <location>
        <begin position="195"/>
        <end position="202"/>
    </location>
</feature>
<feature type="splice variant" id="VSP_039835" description="In isoform 2." evidence="2">
    <location>
        <begin position="203"/>
        <end position="217"/>
    </location>
</feature>
<feature type="sequence conflict" description="In Ref. 3; BAD43193." evidence="3" ref="3">
    <original>K</original>
    <variation>E</variation>
    <location>
        <position position="15"/>
    </location>
</feature>
<feature type="sequence conflict" description="In Ref. 3; BAD43193." evidence="3" ref="3">
    <original>D</original>
    <variation>G</variation>
    <location>
        <position position="31"/>
    </location>
</feature>
<dbReference type="EMBL" id="AC009324">
    <property type="protein sequence ID" value="AAF02862.1"/>
    <property type="status" value="ALT_INIT"/>
    <property type="molecule type" value="Genomic_DNA"/>
</dbReference>
<dbReference type="EMBL" id="CP002684">
    <property type="protein sequence ID" value="AEE33017.1"/>
    <property type="molecule type" value="Genomic_DNA"/>
</dbReference>
<dbReference type="EMBL" id="CP002684">
    <property type="protein sequence ID" value="AEE33018.1"/>
    <property type="molecule type" value="Genomic_DNA"/>
</dbReference>
<dbReference type="EMBL" id="CP002684">
    <property type="protein sequence ID" value="ANM57833.1"/>
    <property type="molecule type" value="Genomic_DNA"/>
</dbReference>
<dbReference type="EMBL" id="CP002684">
    <property type="protein sequence ID" value="ANM57834.1"/>
    <property type="molecule type" value="Genomic_DNA"/>
</dbReference>
<dbReference type="EMBL" id="AK175272">
    <property type="protein sequence ID" value="BAD43035.1"/>
    <property type="molecule type" value="mRNA"/>
</dbReference>
<dbReference type="EMBL" id="AK175430">
    <property type="protein sequence ID" value="BAD43193.1"/>
    <property type="molecule type" value="mRNA"/>
</dbReference>
<dbReference type="EMBL" id="AK176711">
    <property type="protein sequence ID" value="BAD44474.1"/>
    <property type="molecule type" value="mRNA"/>
</dbReference>
<dbReference type="EMBL" id="BT028947">
    <property type="protein sequence ID" value="ABI49494.1"/>
    <property type="molecule type" value="mRNA"/>
</dbReference>
<dbReference type="PIR" id="H96578">
    <property type="entry name" value="H96578"/>
</dbReference>
<dbReference type="RefSeq" id="NP_001031184.1">
    <molecule id="Q67XV7-2"/>
    <property type="nucleotide sequence ID" value="NM_001036107.3"/>
</dbReference>
<dbReference type="RefSeq" id="NP_001319216.1">
    <molecule id="Q67XV7-1"/>
    <property type="nucleotide sequence ID" value="NM_001333613.1"/>
</dbReference>
<dbReference type="RefSeq" id="NP_001319217.1">
    <molecule id="Q67XV7-1"/>
    <property type="nucleotide sequence ID" value="NM_001333617.1"/>
</dbReference>
<dbReference type="RefSeq" id="NP_001320314.1">
    <molecule id="Q67XV7-2"/>
    <property type="nucleotide sequence ID" value="NM_001333618.1"/>
</dbReference>
<dbReference type="RefSeq" id="NP_001320961.1">
    <molecule id="Q67XV7-2"/>
    <property type="nucleotide sequence ID" value="NM_001333614.1"/>
</dbReference>
<dbReference type="RefSeq" id="NP_564642.1">
    <molecule id="Q67XV7-1"/>
    <property type="nucleotide sequence ID" value="NM_104264.2"/>
</dbReference>
<dbReference type="RefSeq" id="NP_564645.1">
    <molecule id="Q67XV7-1"/>
    <property type="nucleotide sequence ID" value="NM_104267.2"/>
</dbReference>
<dbReference type="RefSeq" id="NP_974021.1">
    <molecule id="Q67XV7-2"/>
    <property type="nucleotide sequence ID" value="NM_202292.3"/>
</dbReference>
<dbReference type="SMR" id="Q67XV7"/>
<dbReference type="STRING" id="3702.Q67XV7"/>
<dbReference type="EnsemblPlants" id="AT1G53870.1">
    <molecule id="Q67XV7-1"/>
    <property type="protein sequence ID" value="AT1G53870.1"/>
    <property type="gene ID" value="AT1G53870"/>
</dbReference>
<dbReference type="EnsemblPlants" id="AT1G53870.2">
    <property type="protein sequence ID" value="AT1G53870.2"/>
    <property type="gene ID" value="AT1G53870"/>
</dbReference>
<dbReference type="EnsemblPlants" id="AT1G53870.3">
    <molecule id="Q67XV7-1"/>
    <property type="protein sequence ID" value="AT1G53870.3"/>
    <property type="gene ID" value="AT1G53870"/>
</dbReference>
<dbReference type="EnsemblPlants" id="AT1G53870.4">
    <property type="protein sequence ID" value="AT1G53870.4"/>
    <property type="gene ID" value="AT1G53870"/>
</dbReference>
<dbReference type="EnsemblPlants" id="AT1G53890.1">
    <molecule id="Q67XV7-1"/>
    <property type="protein sequence ID" value="AT1G53890.1"/>
    <property type="gene ID" value="AT1G53890"/>
</dbReference>
<dbReference type="EnsemblPlants" id="AT1G53890.2">
    <property type="protein sequence ID" value="AT1G53890.2"/>
    <property type="gene ID" value="AT1G53890"/>
</dbReference>
<dbReference type="EnsemblPlants" id="AT1G53890.4">
    <molecule id="Q67XV7-1"/>
    <property type="protein sequence ID" value="AT1G53890.4"/>
    <property type="gene ID" value="AT1G53890"/>
</dbReference>
<dbReference type="EnsemblPlants" id="AT1G53890.5">
    <property type="protein sequence ID" value="AT1G53890.5"/>
    <property type="gene ID" value="AT1G53890"/>
</dbReference>
<dbReference type="GeneID" id="841827"/>
<dbReference type="Gramene" id="AT1G53870.1">
    <molecule id="Q67XV7-1"/>
    <property type="protein sequence ID" value="AT1G53870.1"/>
    <property type="gene ID" value="AT1G53870"/>
</dbReference>
<dbReference type="Gramene" id="AT1G53870.2">
    <property type="protein sequence ID" value="AT1G53870.2"/>
    <property type="gene ID" value="AT1G53870"/>
</dbReference>
<dbReference type="Gramene" id="AT1G53870.3">
    <molecule id="Q67XV7-1"/>
    <property type="protein sequence ID" value="AT1G53870.3"/>
    <property type="gene ID" value="AT1G53870"/>
</dbReference>
<dbReference type="Gramene" id="AT1G53870.4">
    <property type="protein sequence ID" value="AT1G53870.4"/>
    <property type="gene ID" value="AT1G53870"/>
</dbReference>
<dbReference type="Gramene" id="AT1G53890.1">
    <molecule id="Q67XV7-1"/>
    <property type="protein sequence ID" value="AT1G53890.1"/>
    <property type="gene ID" value="AT1G53890"/>
</dbReference>
<dbReference type="Gramene" id="AT1G53890.2">
    <property type="protein sequence ID" value="AT1G53890.2"/>
    <property type="gene ID" value="AT1G53890"/>
</dbReference>
<dbReference type="Gramene" id="AT1G53890.4">
    <molecule id="Q67XV7-1"/>
    <property type="protein sequence ID" value="AT1G53890.4"/>
    <property type="gene ID" value="AT1G53890"/>
</dbReference>
<dbReference type="Gramene" id="AT1G53890.5">
    <property type="protein sequence ID" value="AT1G53890.5"/>
    <property type="gene ID" value="AT1G53890"/>
</dbReference>
<dbReference type="KEGG" id="ath:AT1G53870"/>
<dbReference type="KEGG" id="ath:AT1G53890"/>
<dbReference type="Araport" id="AT1G53890"/>
<dbReference type="TAIR" id="AT1G53890"/>
<dbReference type="HOGENOM" id="CLU_063146_2_1_1"/>
<dbReference type="InParanoid" id="Q67XV7"/>
<dbReference type="OMA" id="CARKPAY"/>
<dbReference type="PhylomeDB" id="Q67XV7"/>
<dbReference type="PRO" id="PR:Q67XV7"/>
<dbReference type="Proteomes" id="UP000006548">
    <property type="component" value="Chromosome 1"/>
</dbReference>
<dbReference type="Gene3D" id="2.40.160.200">
    <property type="entry name" value="LURP1-related"/>
    <property type="match status" value="1"/>
</dbReference>
<dbReference type="InterPro" id="IPR007612">
    <property type="entry name" value="LOR"/>
</dbReference>
<dbReference type="InterPro" id="IPR038595">
    <property type="entry name" value="LOR_sf"/>
</dbReference>
<dbReference type="InterPro" id="IPR025659">
    <property type="entry name" value="Tubby-like_C"/>
</dbReference>
<dbReference type="PANTHER" id="PTHR31087">
    <property type="match status" value="1"/>
</dbReference>
<dbReference type="PANTHER" id="PTHR31087:SF81">
    <property type="entry name" value="LURP-ONE-LIKE PROTEIN-RELATED"/>
    <property type="match status" value="1"/>
</dbReference>
<dbReference type="Pfam" id="PF04525">
    <property type="entry name" value="LOR"/>
    <property type="match status" value="1"/>
</dbReference>
<dbReference type="SUPFAM" id="SSF54518">
    <property type="entry name" value="Tubby C-terminal domain-like"/>
    <property type="match status" value="1"/>
</dbReference>
<accession>Q67XV7</accession>
<accession>Q682D7</accession>
<accession>Q682U5</accession>
<accession>Q9S7P7</accession>
<evidence type="ECO:0000250" key="1"/>
<evidence type="ECO:0000303" key="2">
    <source ref="3"/>
</evidence>
<evidence type="ECO:0000305" key="3"/>
<comment type="function">
    <text evidence="1">Might be related to the phospholipid scramblase and tubby-like superfamily of membrane tethered transcription factors.</text>
</comment>
<comment type="alternative products">
    <event type="alternative splicing"/>
    <isoform>
        <id>Q67XV7-1</id>
        <name>1</name>
        <sequence type="displayed"/>
    </isoform>
    <isoform>
        <id>Q67XV7-2</id>
        <name>2</name>
        <sequence type="described" ref="VSP_039834 VSP_039835"/>
    </isoform>
</comment>
<comment type="similarity">
    <text evidence="3">Belongs to the LOR family.</text>
</comment>
<comment type="sequence caution" evidence="3">
    <conflict type="erroneous initiation">
        <sequence resource="EMBL-CDS" id="AAF02862"/>
    </conflict>
    <text>Truncated N-terminus.</text>
</comment>
<reference key="1">
    <citation type="journal article" date="2000" name="Nature">
        <title>Sequence and analysis of chromosome 1 of the plant Arabidopsis thaliana.</title>
        <authorList>
            <person name="Theologis A."/>
            <person name="Ecker J.R."/>
            <person name="Palm C.J."/>
            <person name="Federspiel N.A."/>
            <person name="Kaul S."/>
            <person name="White O."/>
            <person name="Alonso J."/>
            <person name="Altafi H."/>
            <person name="Araujo R."/>
            <person name="Bowman C.L."/>
            <person name="Brooks S.Y."/>
            <person name="Buehler E."/>
            <person name="Chan A."/>
            <person name="Chao Q."/>
            <person name="Chen H."/>
            <person name="Cheuk R.F."/>
            <person name="Chin C.W."/>
            <person name="Chung M.K."/>
            <person name="Conn L."/>
            <person name="Conway A.B."/>
            <person name="Conway A.R."/>
            <person name="Creasy T.H."/>
            <person name="Dewar K."/>
            <person name="Dunn P."/>
            <person name="Etgu P."/>
            <person name="Feldblyum T.V."/>
            <person name="Feng J.-D."/>
            <person name="Fong B."/>
            <person name="Fujii C.Y."/>
            <person name="Gill J.E."/>
            <person name="Goldsmith A.D."/>
            <person name="Haas B."/>
            <person name="Hansen N.F."/>
            <person name="Hughes B."/>
            <person name="Huizar L."/>
            <person name="Hunter J.L."/>
            <person name="Jenkins J."/>
            <person name="Johnson-Hopson C."/>
            <person name="Khan S."/>
            <person name="Khaykin E."/>
            <person name="Kim C.J."/>
            <person name="Koo H.L."/>
            <person name="Kremenetskaia I."/>
            <person name="Kurtz D.B."/>
            <person name="Kwan A."/>
            <person name="Lam B."/>
            <person name="Langin-Hooper S."/>
            <person name="Lee A."/>
            <person name="Lee J.M."/>
            <person name="Lenz C.A."/>
            <person name="Li J.H."/>
            <person name="Li Y.-P."/>
            <person name="Lin X."/>
            <person name="Liu S.X."/>
            <person name="Liu Z.A."/>
            <person name="Luros J.S."/>
            <person name="Maiti R."/>
            <person name="Marziali A."/>
            <person name="Militscher J."/>
            <person name="Miranda M."/>
            <person name="Nguyen M."/>
            <person name="Nierman W.C."/>
            <person name="Osborne B.I."/>
            <person name="Pai G."/>
            <person name="Peterson J."/>
            <person name="Pham P.K."/>
            <person name="Rizzo M."/>
            <person name="Rooney T."/>
            <person name="Rowley D."/>
            <person name="Sakano H."/>
            <person name="Salzberg S.L."/>
            <person name="Schwartz J.R."/>
            <person name="Shinn P."/>
            <person name="Southwick A.M."/>
            <person name="Sun H."/>
            <person name="Tallon L.J."/>
            <person name="Tambunga G."/>
            <person name="Toriumi M.J."/>
            <person name="Town C.D."/>
            <person name="Utterback T."/>
            <person name="Van Aken S."/>
            <person name="Vaysberg M."/>
            <person name="Vysotskaia V.S."/>
            <person name="Walker M."/>
            <person name="Wu D."/>
            <person name="Yu G."/>
            <person name="Fraser C.M."/>
            <person name="Venter J.C."/>
            <person name="Davis R.W."/>
        </authorList>
    </citation>
    <scope>NUCLEOTIDE SEQUENCE [LARGE SCALE GENOMIC DNA]</scope>
    <source>
        <strain>cv. Columbia</strain>
    </source>
</reference>
<reference key="2">
    <citation type="journal article" date="2017" name="Plant J.">
        <title>Araport11: a complete reannotation of the Arabidopsis thaliana reference genome.</title>
        <authorList>
            <person name="Cheng C.Y."/>
            <person name="Krishnakumar V."/>
            <person name="Chan A.P."/>
            <person name="Thibaud-Nissen F."/>
            <person name="Schobel S."/>
            <person name="Town C.D."/>
        </authorList>
    </citation>
    <scope>GENOME REANNOTATION</scope>
    <source>
        <strain>cv. Columbia</strain>
    </source>
</reference>
<reference key="3">
    <citation type="submission" date="2004-09" db="EMBL/GenBank/DDBJ databases">
        <title>Large-scale analysis of RIKEN Arabidopsis full-length (RAFL) cDNAs.</title>
        <authorList>
            <person name="Totoki Y."/>
            <person name="Seki M."/>
            <person name="Ishida J."/>
            <person name="Nakajima M."/>
            <person name="Enju A."/>
            <person name="Kamiya A."/>
            <person name="Narusaka M."/>
            <person name="Shin-i T."/>
            <person name="Nakagawa M."/>
            <person name="Sakamoto N."/>
            <person name="Oishi K."/>
            <person name="Kohara Y."/>
            <person name="Kobayashi M."/>
            <person name="Toyoda A."/>
            <person name="Sakaki Y."/>
            <person name="Sakurai T."/>
            <person name="Iida K."/>
            <person name="Akiyama K."/>
            <person name="Satou M."/>
            <person name="Toyoda T."/>
            <person name="Konagaya A."/>
            <person name="Carninci P."/>
            <person name="Kawai J."/>
            <person name="Hayashizaki Y."/>
            <person name="Shinozaki K."/>
        </authorList>
    </citation>
    <scope>NUCLEOTIDE SEQUENCE [LARGE SCALE MRNA] (ISOFORMS 1 AND 2)</scope>
    <source>
        <strain>cv. Columbia</strain>
    </source>
</reference>
<reference key="4">
    <citation type="submission" date="2006-09" db="EMBL/GenBank/DDBJ databases">
        <title>Arabidopsis ORF clones.</title>
        <authorList>
            <person name="Quinitio C."/>
            <person name="Chen H."/>
            <person name="Kim C.J."/>
            <person name="Shinn P."/>
            <person name="Ecker J.R."/>
        </authorList>
    </citation>
    <scope>NUCLEOTIDE SEQUENCE [LARGE SCALE MRNA] (ISOFORM 1)</scope>
    <source>
        <strain>cv. Columbia</strain>
    </source>
</reference>
<proteinExistence type="evidence at transcript level"/>
<organism>
    <name type="scientific">Arabidopsis thaliana</name>
    <name type="common">Mouse-ear cress</name>
    <dbReference type="NCBI Taxonomy" id="3702"/>
    <lineage>
        <taxon>Eukaryota</taxon>
        <taxon>Viridiplantae</taxon>
        <taxon>Streptophyta</taxon>
        <taxon>Embryophyta</taxon>
        <taxon>Tracheophyta</taxon>
        <taxon>Spermatophyta</taxon>
        <taxon>Magnoliopsida</taxon>
        <taxon>eudicotyledons</taxon>
        <taxon>Gunneridae</taxon>
        <taxon>Pentapetalae</taxon>
        <taxon>rosids</taxon>
        <taxon>malvids</taxon>
        <taxon>Brassicales</taxon>
        <taxon>Brassicaceae</taxon>
        <taxon>Camelineae</taxon>
        <taxon>Arabidopsis</taxon>
    </lineage>
</organism>
<protein>
    <recommendedName>
        <fullName>Protein LURP-one-related 3</fullName>
    </recommendedName>
</protein>